<organism>
    <name type="scientific">Bos taurus</name>
    <name type="common">Bovine</name>
    <dbReference type="NCBI Taxonomy" id="9913"/>
    <lineage>
        <taxon>Eukaryota</taxon>
        <taxon>Metazoa</taxon>
        <taxon>Chordata</taxon>
        <taxon>Craniata</taxon>
        <taxon>Vertebrata</taxon>
        <taxon>Euteleostomi</taxon>
        <taxon>Mammalia</taxon>
        <taxon>Eutheria</taxon>
        <taxon>Laurasiatheria</taxon>
        <taxon>Artiodactyla</taxon>
        <taxon>Ruminantia</taxon>
        <taxon>Pecora</taxon>
        <taxon>Bovidae</taxon>
        <taxon>Bovinae</taxon>
        <taxon>Bos</taxon>
    </lineage>
</organism>
<proteinExistence type="evidence at transcript level"/>
<dbReference type="EMBL" id="BC123516">
    <property type="protein sequence ID" value="AAI23517.1"/>
    <property type="molecule type" value="mRNA"/>
</dbReference>
<dbReference type="RefSeq" id="NP_001071312.1">
    <property type="nucleotide sequence ID" value="NM_001077844.1"/>
</dbReference>
<dbReference type="FunCoup" id="Q08DY0">
    <property type="interactions" value="1"/>
</dbReference>
<dbReference type="STRING" id="9913.ENSBTAP00000024611"/>
<dbReference type="SwissPalm" id="Q08DY0"/>
<dbReference type="PaxDb" id="9913-ENSBTAP00000024611"/>
<dbReference type="Ensembl" id="ENSBTAT00000024611.6">
    <property type="protein sequence ID" value="ENSBTAP00000024611.4"/>
    <property type="gene ID" value="ENSBTAG00000018493.6"/>
</dbReference>
<dbReference type="GeneID" id="504339"/>
<dbReference type="KEGG" id="bta:504339"/>
<dbReference type="CTD" id="203111"/>
<dbReference type="VEuPathDB" id="HostDB:ENSBTAG00000018493"/>
<dbReference type="VGNC" id="VGNC:28585">
    <property type="gene designation" value="ERICH5"/>
</dbReference>
<dbReference type="eggNOG" id="ENOG502SVIU">
    <property type="taxonomic scope" value="Eukaryota"/>
</dbReference>
<dbReference type="GeneTree" id="ENSGT00390000010783"/>
<dbReference type="HOGENOM" id="CLU_064315_0_0_1"/>
<dbReference type="InParanoid" id="Q08DY0"/>
<dbReference type="OMA" id="PKPCTLG"/>
<dbReference type="OrthoDB" id="9532962at2759"/>
<dbReference type="TreeFam" id="TF337219"/>
<dbReference type="Proteomes" id="UP000009136">
    <property type="component" value="Chromosome 14"/>
</dbReference>
<dbReference type="Bgee" id="ENSBTAG00000018493">
    <property type="expression patterns" value="Expressed in olfactory segment of nasal mucosa and 48 other cell types or tissues"/>
</dbReference>
<dbReference type="InterPro" id="IPR027856">
    <property type="entry name" value="Glu-rich_5"/>
</dbReference>
<dbReference type="PANTHER" id="PTHR23006">
    <property type="entry name" value="GLUTAMATE-RICH PROTEIN 5"/>
    <property type="match status" value="1"/>
</dbReference>
<dbReference type="PANTHER" id="PTHR23006:SF0">
    <property type="entry name" value="GLUTAMATE-RICH PROTEIN 5"/>
    <property type="match status" value="1"/>
</dbReference>
<keyword id="KW-0597">Phosphoprotein</keyword>
<keyword id="KW-1185">Reference proteome</keyword>
<gene>
    <name type="primary">ERICH5</name>
</gene>
<feature type="chain" id="PRO_0000294432" description="Glutamate-rich protein 5">
    <location>
        <begin position="1"/>
        <end position="453"/>
    </location>
</feature>
<feature type="region of interest" description="Disordered" evidence="2">
    <location>
        <begin position="1"/>
        <end position="38"/>
    </location>
</feature>
<feature type="region of interest" description="Disordered" evidence="2">
    <location>
        <begin position="66"/>
        <end position="377"/>
    </location>
</feature>
<feature type="region of interest" description="Disordered" evidence="2">
    <location>
        <begin position="394"/>
        <end position="453"/>
    </location>
</feature>
<feature type="compositionally biased region" description="Basic and acidic residues" evidence="2">
    <location>
        <begin position="11"/>
        <end position="21"/>
    </location>
</feature>
<feature type="compositionally biased region" description="Polar residues" evidence="2">
    <location>
        <begin position="230"/>
        <end position="243"/>
    </location>
</feature>
<feature type="compositionally biased region" description="Polar residues" evidence="2">
    <location>
        <begin position="271"/>
        <end position="283"/>
    </location>
</feature>
<feature type="compositionally biased region" description="Basic and acidic residues" evidence="2">
    <location>
        <begin position="305"/>
        <end position="332"/>
    </location>
</feature>
<feature type="compositionally biased region" description="Basic and acidic residues" evidence="2">
    <location>
        <begin position="364"/>
        <end position="374"/>
    </location>
</feature>
<feature type="compositionally biased region" description="Basic and acidic residues" evidence="2">
    <location>
        <begin position="394"/>
        <end position="403"/>
    </location>
</feature>
<feature type="compositionally biased region" description="Acidic residues" evidence="2">
    <location>
        <begin position="404"/>
        <end position="413"/>
    </location>
</feature>
<feature type="compositionally biased region" description="Basic and acidic residues" evidence="2">
    <location>
        <begin position="414"/>
        <end position="424"/>
    </location>
</feature>
<feature type="modified residue" description="Phosphoserine" evidence="1">
    <location>
        <position position="155"/>
    </location>
</feature>
<evidence type="ECO:0000250" key="1">
    <source>
        <dbReference type="UniProtKB" id="Q8K0S2"/>
    </source>
</evidence>
<evidence type="ECO:0000256" key="2">
    <source>
        <dbReference type="SAM" id="MobiDB-lite"/>
    </source>
</evidence>
<accession>Q08DY0</accession>
<protein>
    <recommendedName>
        <fullName>Glutamate-rich protein 5</fullName>
    </recommendedName>
</protein>
<reference key="1">
    <citation type="submission" date="2006-09" db="EMBL/GenBank/DDBJ databases">
        <authorList>
            <consortium name="NIH - Mammalian Gene Collection (MGC) project"/>
        </authorList>
    </citation>
    <scope>NUCLEOTIDE SEQUENCE [LARGE SCALE MRNA]</scope>
    <source>
        <strain>Hereford</strain>
        <tissue>Fetal liver</tissue>
    </source>
</reference>
<sequence length="453" mass="47742">MGCSSSALNKAGDDNRLRSATEESESCFVQPKPRALGRESTLCGKVQKESLPPLDKLKISAVSTANGVQSLPEQPLAKEAADPPGATEETQPLQGLKGSEPPQPGGKDGAPGAEGKEEDVEAVTEAPPLKGSAETEPLGAEAENQPLITAGERDSTGAVEGTEDPQAAGEMTPLGTAERVPLEAAREPGSQEAGGKGEQSQLPETVPKETESPEILEGSQPVETAEPPQLQETVGENEQSQPLETVPKENASLEVSDGSQSVGAEGKKQLQETLGENEQSQLRETILGEHGGPEVSDGSQSVGAEEEKRLQEMLGKDEQPQLRETIPREHGGPEMSDASQSVETAVKADSLHKAPEGPGNMEKIQPERTVESMEHPAGILETGAKVEMARKIHTNEEDQHIEGETGETVETEMESEKVSEGAETKEEETGEAMDLSAATQIGMDGRVKGHSML</sequence>
<name>ERIC5_BOVIN</name>